<sequence>MNPNQKIITIGSMSLTIATVCFLMQIAILATNVTLHFRQNEESIPAYNQTTPCKPIIIERNIKYRNWSKPQCQITGFAPFSKDNSIRLSAGGGIWVTREPYVSCDPSKCYQFALGQGTTLDHNHSNGTIHDRTPHRTLLMNELGVPFHLGTRQVCIAWSRSSCHDGKAWLHVCVTGDDRNATASFIYNGMLVDSIGSWSQNILRTQESECVCINGTCTVVMTDGSASGKADTRILFIREGKIVHISPLSGSAQHIEECSCYPKSYPNVRCVCRDNWKGSNRPVKLDINMADYSIDSSYVCSGLVGDTPRNDDSSSSSNCRDPNNERGNPGVKGWAFDIGDDVWMGRTISKDSRSGYETFRVISGWATANSKSQTNRQVIVDNNNWSGYSGIFSVESKSCINRCFYVELIRGRPQENRVWWTTNSIVVFCGTSGTYGTGSWPDGANINFMPL</sequence>
<proteinExistence type="inferred from homology"/>
<protein>
    <recommendedName>
        <fullName evidence="1">Neuraminidase</fullName>
        <ecNumber evidence="1">3.2.1.18</ecNumber>
    </recommendedName>
</protein>
<organismHost>
    <name type="scientific">Aves</name>
    <dbReference type="NCBI Taxonomy" id="8782"/>
</organismHost>
<gene>
    <name evidence="1" type="primary">NA</name>
</gene>
<name>NRAM_I83A7</name>
<evidence type="ECO:0000255" key="1">
    <source>
        <dbReference type="HAMAP-Rule" id="MF_04071"/>
    </source>
</evidence>
<evidence type="ECO:0000256" key="2">
    <source>
        <dbReference type="SAM" id="MobiDB-lite"/>
    </source>
</evidence>
<feature type="chain" id="PRO_0000078681" description="Neuraminidase">
    <location>
        <begin position="1"/>
        <end position="451"/>
    </location>
</feature>
<feature type="topological domain" description="Intravirion" evidence="1">
    <location>
        <begin position="1"/>
        <end position="6"/>
    </location>
</feature>
<feature type="transmembrane region" description="Helical" evidence="1">
    <location>
        <begin position="7"/>
        <end position="29"/>
    </location>
</feature>
<feature type="topological domain" description="Virion surface" evidence="1">
    <location>
        <begin position="30"/>
        <end position="451"/>
    </location>
</feature>
<feature type="region of interest" description="Involved in apical transport and lipid raft association" evidence="1">
    <location>
        <begin position="11"/>
        <end position="33"/>
    </location>
</feature>
<feature type="region of interest" description="Hypervariable stalk region" evidence="1">
    <location>
        <begin position="36"/>
        <end position="68"/>
    </location>
</feature>
<feature type="region of interest" description="Head of neuraminidase" evidence="1">
    <location>
        <begin position="71"/>
        <end position="451"/>
    </location>
</feature>
<feature type="region of interest" description="Disordered" evidence="2">
    <location>
        <begin position="307"/>
        <end position="331"/>
    </location>
</feature>
<feature type="active site" description="Proton donor/acceptor" evidence="1">
    <location>
        <position position="131"/>
    </location>
</feature>
<feature type="active site" description="Nucleophile" evidence="1">
    <location>
        <position position="388"/>
    </location>
</feature>
<feature type="binding site" evidence="1">
    <location>
        <position position="98"/>
    </location>
    <ligand>
        <name>substrate</name>
    </ligand>
</feature>
<feature type="binding site" evidence="1">
    <location>
        <position position="132"/>
    </location>
    <ligand>
        <name>substrate</name>
    </ligand>
</feature>
<feature type="binding site" evidence="1">
    <location>
        <begin position="256"/>
        <end position="257"/>
    </location>
    <ligand>
        <name>substrate</name>
    </ligand>
</feature>
<feature type="binding site" evidence="1">
    <location>
        <position position="273"/>
    </location>
    <ligand>
        <name>substrate</name>
    </ligand>
</feature>
<feature type="binding site" evidence="1">
    <location>
        <position position="274"/>
    </location>
    <ligand>
        <name>Ca(2+)</name>
        <dbReference type="ChEBI" id="CHEBI:29108"/>
    </ligand>
</feature>
<feature type="binding site" evidence="1">
    <location>
        <position position="278"/>
    </location>
    <ligand>
        <name>Ca(2+)</name>
        <dbReference type="ChEBI" id="CHEBI:29108"/>
    </ligand>
</feature>
<feature type="binding site" evidence="1">
    <location>
        <position position="306"/>
    </location>
    <ligand>
        <name>Ca(2+)</name>
        <dbReference type="ChEBI" id="CHEBI:29108"/>
    </ligand>
</feature>
<feature type="binding site" evidence="1">
    <location>
        <position position="353"/>
    </location>
    <ligand>
        <name>substrate</name>
    </ligand>
</feature>
<feature type="glycosylation site" description="N-linked (GlcNAc...) asparagine; by host" evidence="1">
    <location>
        <position position="32"/>
    </location>
</feature>
<feature type="glycosylation site" description="N-linked (GlcNAc...) asparagine; by host" evidence="1">
    <location>
        <position position="48"/>
    </location>
</feature>
<feature type="glycosylation site" description="N-linked (GlcNAc...) asparagine; by host" evidence="1">
    <location>
        <position position="66"/>
    </location>
</feature>
<feature type="glycosylation site" description="N-linked (GlcNAc...) asparagine; by host" evidence="1">
    <location>
        <position position="123"/>
    </location>
</feature>
<feature type="glycosylation site" description="N-linked (GlcNAc...) asparagine; by host" evidence="1">
    <location>
        <position position="126"/>
    </location>
</feature>
<feature type="glycosylation site" description="N-linked (GlcNAc...) asparagine; by host" evidence="1">
    <location>
        <position position="180"/>
    </location>
</feature>
<feature type="glycosylation site" description="N-linked (GlcNAc...) asparagine; by host" evidence="1">
    <location>
        <position position="214"/>
    </location>
</feature>
<feature type="glycosylation site" description="N-linked (GlcNAc...) asparagine; by host" evidence="1">
    <location>
        <position position="384"/>
    </location>
</feature>
<feature type="disulfide bond" evidence="1">
    <location>
        <begin position="72"/>
        <end position="399"/>
    </location>
</feature>
<feature type="disulfide bond" evidence="1">
    <location>
        <begin position="104"/>
        <end position="109"/>
    </location>
</feature>
<feature type="disulfide bond" evidence="1">
    <location>
        <begin position="163"/>
        <end position="210"/>
    </location>
</feature>
<feature type="disulfide bond" evidence="1">
    <location>
        <begin position="212"/>
        <end position="217"/>
    </location>
</feature>
<feature type="disulfide bond" evidence="1">
    <location>
        <begin position="258"/>
        <end position="272"/>
    </location>
</feature>
<feature type="disulfide bond" evidence="1">
    <location>
        <begin position="260"/>
        <end position="270"/>
    </location>
</feature>
<feature type="disulfide bond" evidence="1">
    <location>
        <begin position="300"/>
        <end position="319"/>
    </location>
</feature>
<feature type="disulfide bond" evidence="1">
    <location>
        <begin position="403"/>
        <end position="429"/>
    </location>
</feature>
<reference key="1">
    <citation type="journal article" date="1985" name="Virology">
        <title>The neuraminidases of the virulent and avirulent A/Chicken/Pennsylvania/83 (H5N2) influenza A viruses: sequence and antigenic analyses.</title>
        <authorList>
            <person name="Deshpande K.L."/>
            <person name="Naeve C.W."/>
            <person name="Webster R.G."/>
        </authorList>
    </citation>
    <scope>NUCLEOTIDE SEQUENCE [GENOMIC RNA]</scope>
</reference>
<reference key="2">
    <citation type="journal article" date="2004" name="Virus Res.">
        <title>Assembly and budding of influenza virus.</title>
        <authorList>
            <person name="Nayak D.P."/>
            <person name="Hui E.K."/>
            <person name="Barman S."/>
        </authorList>
    </citation>
    <scope>REVIEW</scope>
</reference>
<reference key="3">
    <citation type="journal article" date="2005" name="N. Engl. J. Med.">
        <title>Neuraminidase inhibitors for influenza.</title>
        <authorList>
            <person name="Moscona A."/>
        </authorList>
    </citation>
    <scope>REVIEW</scope>
</reference>
<reference key="4">
    <citation type="journal article" date="2005" name="Biol. Pharm. Bull.">
        <title>Sialobiology of influenza: molecular mechanism of host range variation of influenza viruses.</title>
        <authorList>
            <person name="Suzuki Y."/>
        </authorList>
    </citation>
    <scope>REVIEW</scope>
</reference>
<comment type="function">
    <text evidence="1">Catalyzes the removal of terminal sialic acid residues from viral and cellular glycoconjugates. Cleaves off the terminal sialic acids on the glycosylated HA during virus budding to facilitate virus release. Additionally helps virus spread through the circulation by further removing sialic acids from the cell surface. These cleavages prevent self-aggregation and ensure the efficient spread of the progeny virus from cell to cell. Otherwise, infection would be limited to one round of replication. Described as a receptor-destroying enzyme because it cleaves a terminal sialic acid from the cellular receptors. May facilitate viral invasion of the upper airways by cleaving the sialic acid moieties on the mucin of the airway epithelial cells. Likely to plays a role in the budding process through its association with lipid rafts during intracellular transport. May additionally display a raft-association independent effect on budding. Plays a role in the determination of host range restriction on replication and virulence. Sialidase activity in late endosome/lysosome traffic seems to enhance virus replication.</text>
</comment>
<comment type="catalytic activity">
    <reaction evidence="1">
        <text>Hydrolysis of alpha-(2-&gt;3)-, alpha-(2-&gt;6)-, alpha-(2-&gt;8)- glycosidic linkages of terminal sialic acid residues in oligosaccharides, glycoproteins, glycolipids, colominic acid and synthetic substrates.</text>
        <dbReference type="EC" id="3.2.1.18"/>
    </reaction>
</comment>
<comment type="cofactor">
    <cofactor evidence="1">
        <name>Ca(2+)</name>
        <dbReference type="ChEBI" id="CHEBI:29108"/>
    </cofactor>
</comment>
<comment type="activity regulation">
    <text evidence="1">Inhibited by the neuraminidase inhibitors zanamivir (Relenza) and oseltamivir (Tamiflu). These drugs interfere with the release of progeny virus from infected cells and are effective against all influenza strains. Resistance to neuraminidase inhibitors is quite rare.</text>
</comment>
<comment type="subunit">
    <text evidence="1">Homotetramer.</text>
</comment>
<comment type="subcellular location">
    <subcellularLocation>
        <location evidence="1">Virion membrane</location>
    </subcellularLocation>
    <subcellularLocation>
        <location evidence="1">Host apical cell membrane</location>
        <topology evidence="1">Single-pass type II membrane protein</topology>
    </subcellularLocation>
    <text evidence="1">Preferentially accumulates at the apical plasma membrane in infected polarized epithelial cells, which is the virus assembly site. Uses lipid rafts for cell surface transport and apical sorting. In the virion, forms a mushroom-shaped spike on the surface of the membrane.</text>
</comment>
<comment type="domain">
    <text evidence="1">Intact N-terminus is essential for virion morphogenesis. Possesses two apical sorting signals, one in the ectodomain, which is likely to be a glycan, and the other in the transmembrane domain. The transmembrane domain also plays a role in lipid raft association.</text>
</comment>
<comment type="PTM">
    <text evidence="1">N-glycosylated.</text>
</comment>
<comment type="miscellaneous">
    <text>The influenza A genome consist of 8 RNA segments. Genetic variation of hemagglutinin and/or neuraminidase genes results in the emergence of new influenza strains. The mechanism of variation can be the result of point mutations or the result of genetic reassortment between segments of two different strains.</text>
</comment>
<comment type="similarity">
    <text evidence="1">Belongs to the glycosyl hydrolase 34 family.</text>
</comment>
<keyword id="KW-0106">Calcium</keyword>
<keyword id="KW-1015">Disulfide bond</keyword>
<keyword id="KW-0325">Glycoprotein</keyword>
<keyword id="KW-0326">Glycosidase</keyword>
<keyword id="KW-1032">Host cell membrane</keyword>
<keyword id="KW-1043">Host membrane</keyword>
<keyword id="KW-0378">Hydrolase</keyword>
<keyword id="KW-0472">Membrane</keyword>
<keyword id="KW-0479">Metal-binding</keyword>
<keyword id="KW-0735">Signal-anchor</keyword>
<keyword id="KW-0812">Transmembrane</keyword>
<keyword id="KW-1133">Transmembrane helix</keyword>
<keyword id="KW-0946">Virion</keyword>
<organism>
    <name type="scientific">Influenza A virus (strain A/Chicken/Pennsylvania/8125/1983 H5N2)</name>
    <dbReference type="NCBI Taxonomy" id="385618"/>
    <lineage>
        <taxon>Viruses</taxon>
        <taxon>Riboviria</taxon>
        <taxon>Orthornavirae</taxon>
        <taxon>Negarnaviricota</taxon>
        <taxon>Polyploviricotina</taxon>
        <taxon>Insthoviricetes</taxon>
        <taxon>Articulavirales</taxon>
        <taxon>Orthomyxoviridae</taxon>
        <taxon>Alphainfluenzavirus</taxon>
        <taxon>Alphainfluenzavirus influenzae</taxon>
        <taxon>Influenza A virus</taxon>
    </lineage>
</organism>
<dbReference type="EC" id="3.2.1.18" evidence="1"/>
<dbReference type="EMBL" id="M11925">
    <property type="protein sequence ID" value="AAA43423.1"/>
    <property type="molecule type" value="Genomic_RNA"/>
</dbReference>
<dbReference type="SMR" id="P09574"/>
<dbReference type="CAZy" id="GH34">
    <property type="family name" value="Glycoside Hydrolase Family 34"/>
</dbReference>
<dbReference type="GlyCosmos" id="P09574">
    <property type="glycosylation" value="8 sites, No reported glycans"/>
</dbReference>
<dbReference type="GO" id="GO:0020002">
    <property type="term" value="C:host cell plasma membrane"/>
    <property type="evidence" value="ECO:0007669"/>
    <property type="project" value="UniProtKB-SubCell"/>
</dbReference>
<dbReference type="GO" id="GO:0016020">
    <property type="term" value="C:membrane"/>
    <property type="evidence" value="ECO:0007669"/>
    <property type="project" value="UniProtKB-UniRule"/>
</dbReference>
<dbReference type="GO" id="GO:0055036">
    <property type="term" value="C:virion membrane"/>
    <property type="evidence" value="ECO:0007669"/>
    <property type="project" value="UniProtKB-SubCell"/>
</dbReference>
<dbReference type="GO" id="GO:0004308">
    <property type="term" value="F:exo-alpha-sialidase activity"/>
    <property type="evidence" value="ECO:0007669"/>
    <property type="project" value="UniProtKB-UniRule"/>
</dbReference>
<dbReference type="GO" id="GO:0046872">
    <property type="term" value="F:metal ion binding"/>
    <property type="evidence" value="ECO:0007669"/>
    <property type="project" value="UniProtKB-UniRule"/>
</dbReference>
<dbReference type="GO" id="GO:0005975">
    <property type="term" value="P:carbohydrate metabolic process"/>
    <property type="evidence" value="ECO:0007669"/>
    <property type="project" value="InterPro"/>
</dbReference>
<dbReference type="GO" id="GO:0046761">
    <property type="term" value="P:viral budding from plasma membrane"/>
    <property type="evidence" value="ECO:0007669"/>
    <property type="project" value="UniProtKB-UniRule"/>
</dbReference>
<dbReference type="CDD" id="cd15483">
    <property type="entry name" value="Influenza_NA"/>
    <property type="match status" value="1"/>
</dbReference>
<dbReference type="Gene3D" id="2.120.10.10">
    <property type="match status" value="1"/>
</dbReference>
<dbReference type="HAMAP" id="MF_04071">
    <property type="entry name" value="INFV_NRAM"/>
    <property type="match status" value="1"/>
</dbReference>
<dbReference type="InterPro" id="IPR001860">
    <property type="entry name" value="Glyco_hydro_34"/>
</dbReference>
<dbReference type="InterPro" id="IPR033654">
    <property type="entry name" value="Sialidase_Influenza_A/B"/>
</dbReference>
<dbReference type="InterPro" id="IPR036278">
    <property type="entry name" value="Sialidase_sf"/>
</dbReference>
<dbReference type="Pfam" id="PF00064">
    <property type="entry name" value="Neur"/>
    <property type="match status" value="1"/>
</dbReference>
<dbReference type="SUPFAM" id="SSF50939">
    <property type="entry name" value="Sialidases"/>
    <property type="match status" value="1"/>
</dbReference>
<accession>P09574</accession>